<accession>Q94KU2</accession>
<keyword id="KW-0150">Chloroplast</keyword>
<keyword id="KW-0903">Direct protein sequencing</keyword>
<keyword id="KW-0311">Gluconate utilization</keyword>
<keyword id="KW-0521">NADP</keyword>
<keyword id="KW-0560">Oxidoreductase</keyword>
<keyword id="KW-0570">Pentose shunt</keyword>
<keyword id="KW-0934">Plastid</keyword>
<keyword id="KW-1185">Reference proteome</keyword>
<keyword id="KW-0809">Transit peptide</keyword>
<dbReference type="EC" id="1.1.1.44" evidence="3"/>
<dbReference type="EMBL" id="AF295670">
    <property type="protein sequence ID" value="AAK49897.1"/>
    <property type="molecule type" value="mRNA"/>
</dbReference>
<dbReference type="SMR" id="Q94KU2"/>
<dbReference type="SABIO-RK" id="Q94KU2"/>
<dbReference type="UniPathway" id="UPA00115">
    <property type="reaction ID" value="UER00410"/>
</dbReference>
<dbReference type="Proteomes" id="UP001155700">
    <property type="component" value="Unplaced"/>
</dbReference>
<dbReference type="GO" id="GO:0009507">
    <property type="term" value="C:chloroplast"/>
    <property type="evidence" value="ECO:0000314"/>
    <property type="project" value="UniProtKB"/>
</dbReference>
<dbReference type="GO" id="GO:0005829">
    <property type="term" value="C:cytosol"/>
    <property type="evidence" value="ECO:0000318"/>
    <property type="project" value="GO_Central"/>
</dbReference>
<dbReference type="GO" id="GO:0050661">
    <property type="term" value="F:NADP binding"/>
    <property type="evidence" value="ECO:0000318"/>
    <property type="project" value="GO_Central"/>
</dbReference>
<dbReference type="GO" id="GO:0008114">
    <property type="term" value="F:phosphogluconate 2-dehydrogenase activity"/>
    <property type="evidence" value="ECO:0000318"/>
    <property type="project" value="GO_Central"/>
</dbReference>
<dbReference type="GO" id="GO:0004616">
    <property type="term" value="F:phosphogluconate dehydrogenase (decarboxylating) activity"/>
    <property type="evidence" value="ECO:0000314"/>
    <property type="project" value="UniProtKB"/>
</dbReference>
<dbReference type="GO" id="GO:0019521">
    <property type="term" value="P:D-gluconate metabolic process"/>
    <property type="evidence" value="ECO:0007669"/>
    <property type="project" value="UniProtKB-KW"/>
</dbReference>
<dbReference type="GO" id="GO:0009051">
    <property type="term" value="P:pentose-phosphate shunt, oxidative branch"/>
    <property type="evidence" value="ECO:0000318"/>
    <property type="project" value="GO_Central"/>
</dbReference>
<dbReference type="FunFam" id="1.10.1040.10:FF:000002">
    <property type="entry name" value="6-phosphogluconate dehydrogenase, decarboxylating"/>
    <property type="match status" value="1"/>
</dbReference>
<dbReference type="FunFam" id="1.20.5.320:FF:000001">
    <property type="entry name" value="6-phosphogluconate dehydrogenase, decarboxylating"/>
    <property type="match status" value="1"/>
</dbReference>
<dbReference type="FunFam" id="3.40.50.720:FF:000007">
    <property type="entry name" value="6-phosphogluconate dehydrogenase, decarboxylating"/>
    <property type="match status" value="1"/>
</dbReference>
<dbReference type="Gene3D" id="1.20.5.320">
    <property type="entry name" value="6-Phosphogluconate Dehydrogenase, domain 3"/>
    <property type="match status" value="1"/>
</dbReference>
<dbReference type="Gene3D" id="1.10.1040.10">
    <property type="entry name" value="N-(1-d-carboxylethyl)-l-norvaline Dehydrogenase, domain 2"/>
    <property type="match status" value="1"/>
</dbReference>
<dbReference type="Gene3D" id="3.40.50.720">
    <property type="entry name" value="NAD(P)-binding Rossmann-like Domain"/>
    <property type="match status" value="1"/>
</dbReference>
<dbReference type="InterPro" id="IPR008927">
    <property type="entry name" value="6-PGluconate_DH-like_C_sf"/>
</dbReference>
<dbReference type="InterPro" id="IPR013328">
    <property type="entry name" value="6PGD_dom2"/>
</dbReference>
<dbReference type="InterPro" id="IPR006114">
    <property type="entry name" value="6PGDH_C"/>
</dbReference>
<dbReference type="InterPro" id="IPR006113">
    <property type="entry name" value="6PGDH_Gnd/GntZ"/>
</dbReference>
<dbReference type="InterPro" id="IPR006115">
    <property type="entry name" value="6PGDH_NADP-bd"/>
</dbReference>
<dbReference type="InterPro" id="IPR036291">
    <property type="entry name" value="NAD(P)-bd_dom_sf"/>
</dbReference>
<dbReference type="InterPro" id="IPR006183">
    <property type="entry name" value="Pgluconate_DH"/>
</dbReference>
<dbReference type="NCBIfam" id="TIGR00873">
    <property type="entry name" value="gnd"/>
    <property type="match status" value="1"/>
</dbReference>
<dbReference type="NCBIfam" id="NF006765">
    <property type="entry name" value="PRK09287.1"/>
    <property type="match status" value="1"/>
</dbReference>
<dbReference type="PANTHER" id="PTHR11811">
    <property type="entry name" value="6-PHOSPHOGLUCONATE DEHYDROGENASE"/>
    <property type="match status" value="1"/>
</dbReference>
<dbReference type="Pfam" id="PF00393">
    <property type="entry name" value="6PGD"/>
    <property type="match status" value="1"/>
</dbReference>
<dbReference type="Pfam" id="PF03446">
    <property type="entry name" value="NAD_binding_2"/>
    <property type="match status" value="1"/>
</dbReference>
<dbReference type="PRINTS" id="PR00076">
    <property type="entry name" value="6PGDHDRGNASE"/>
</dbReference>
<dbReference type="SMART" id="SM01350">
    <property type="entry name" value="6PGD"/>
    <property type="match status" value="1"/>
</dbReference>
<dbReference type="SUPFAM" id="SSF48179">
    <property type="entry name" value="6-phosphogluconate dehydrogenase C-terminal domain-like"/>
    <property type="match status" value="1"/>
</dbReference>
<dbReference type="SUPFAM" id="SSF51735">
    <property type="entry name" value="NAD(P)-binding Rossmann-fold domains"/>
    <property type="match status" value="1"/>
</dbReference>
<protein>
    <recommendedName>
        <fullName evidence="4">6-phosphogluconate dehydrogenase, decarboxylating 2, chloroplastic</fullName>
        <ecNumber evidence="3">1.1.1.44</ecNumber>
    </recommendedName>
</protein>
<organism>
    <name type="scientific">Spinacia oleracea</name>
    <name type="common">Spinach</name>
    <dbReference type="NCBI Taxonomy" id="3562"/>
    <lineage>
        <taxon>Eukaryota</taxon>
        <taxon>Viridiplantae</taxon>
        <taxon>Streptophyta</taxon>
        <taxon>Embryophyta</taxon>
        <taxon>Tracheophyta</taxon>
        <taxon>Spermatophyta</taxon>
        <taxon>Magnoliopsida</taxon>
        <taxon>eudicotyledons</taxon>
        <taxon>Gunneridae</taxon>
        <taxon>Pentapetalae</taxon>
        <taxon>Caryophyllales</taxon>
        <taxon>Chenopodiaceae</taxon>
        <taxon>Chenopodioideae</taxon>
        <taxon>Anserineae</taxon>
        <taxon>Spinacia</taxon>
    </lineage>
</organism>
<reference key="1">
    <citation type="journal article" date="2001" name="Eur. J. Biochem.">
        <title>Purification and cloning of chloroplast 6-phosphogluconate dehydrogenase from spinach. Cyanobacterial genes for chloroplast and cytosolic isoenzymes encoded in eukaryotic chromosomes.</title>
        <authorList>
            <person name="Krepinsky K."/>
            <person name="Plaumann M."/>
            <person name="Martin W."/>
            <person name="Schnarrenberger C."/>
        </authorList>
    </citation>
    <scope>NUCLEOTIDE SEQUENCE [MRNA]</scope>
    <scope>FUNCTION</scope>
    <scope>CATALYTIC ACTIVITY</scope>
    <scope>SUBUNIT</scope>
    <scope>BIOPHYSICOCHEMICAL PROPERTIES</scope>
    <scope>PROTEIN SEQUENCE OF 71-83; 288-300; 350-357 AND 358-369</scope>
</reference>
<evidence type="ECO:0000250" key="1">
    <source>
        <dbReference type="UniProtKB" id="P96789"/>
    </source>
</evidence>
<evidence type="ECO:0000255" key="2"/>
<evidence type="ECO:0000269" key="3">
    <source>
    </source>
</evidence>
<evidence type="ECO:0000305" key="4"/>
<gene>
    <name evidence="4" type="primary">pgdP</name>
</gene>
<feature type="transit peptide" description="Chloroplast" evidence="2">
    <location>
        <begin position="1"/>
        <end position="44"/>
    </location>
</feature>
<feature type="chain" id="PRO_0000421104" description="6-phosphogluconate dehydrogenase, decarboxylating 2, chloroplastic">
    <location>
        <begin position="45"/>
        <end position="537"/>
    </location>
</feature>
<feature type="active site" description="Proton acceptor" evidence="1">
    <location>
        <position position="230"/>
    </location>
</feature>
<feature type="active site" description="Proton donor" evidence="1">
    <location>
        <position position="237"/>
    </location>
</feature>
<feature type="binding site" evidence="1">
    <location>
        <begin position="55"/>
        <end position="60"/>
    </location>
    <ligand>
        <name>NADP(+)</name>
        <dbReference type="ChEBI" id="CHEBI:58349"/>
    </ligand>
</feature>
<feature type="binding site" evidence="1">
    <location>
        <begin position="78"/>
        <end position="80"/>
    </location>
    <ligand>
        <name>NADP(+)</name>
        <dbReference type="ChEBI" id="CHEBI:58349"/>
    </ligand>
</feature>
<feature type="binding site" evidence="1">
    <location>
        <begin position="122"/>
        <end position="124"/>
    </location>
    <ligand>
        <name>NADP(+)</name>
        <dbReference type="ChEBI" id="CHEBI:58349"/>
    </ligand>
</feature>
<feature type="binding site" evidence="1">
    <location>
        <position position="150"/>
    </location>
    <ligand>
        <name>NADP(+)</name>
        <dbReference type="ChEBI" id="CHEBI:58349"/>
    </ligand>
</feature>
<feature type="binding site" description="in other chain" evidence="1">
    <location>
        <position position="150"/>
    </location>
    <ligand>
        <name>substrate</name>
        <note>ligand shared between dimeric partners</note>
    </ligand>
</feature>
<feature type="binding site" description="in other chain" evidence="1">
    <location>
        <begin position="176"/>
        <end position="178"/>
    </location>
    <ligand>
        <name>substrate</name>
        <note>ligand shared between dimeric partners</note>
    </ligand>
</feature>
<feature type="binding site" description="in other chain" evidence="1">
    <location>
        <begin position="233"/>
        <end position="234"/>
    </location>
    <ligand>
        <name>substrate</name>
        <note>ligand shared between dimeric partners</note>
    </ligand>
</feature>
<feature type="binding site" description="in other chain" evidence="1">
    <location>
        <position position="238"/>
    </location>
    <ligand>
        <name>substrate</name>
        <note>ligand shared between dimeric partners</note>
    </ligand>
</feature>
<feature type="binding site" description="in other chain" evidence="1">
    <location>
        <position position="308"/>
    </location>
    <ligand>
        <name>substrate</name>
        <note>ligand shared between dimeric partners</note>
    </ligand>
</feature>
<feature type="binding site" description="in other chain" evidence="1">
    <location>
        <position position="335"/>
    </location>
    <ligand>
        <name>substrate</name>
        <note>ligand shared between dimeric partners</note>
    </ligand>
</feature>
<feature type="binding site" evidence="1">
    <location>
        <position position="500"/>
    </location>
    <ligand>
        <name>substrate</name>
        <note>ligand shared between dimeric partners</note>
    </ligand>
</feature>
<feature type="binding site" evidence="1">
    <location>
        <position position="506"/>
    </location>
    <ligand>
        <name>substrate</name>
        <note>ligand shared between dimeric partners</note>
    </ligand>
</feature>
<comment type="function">
    <text evidence="3">Catalyzes the oxidative decarboxylation of 6-phosphogluconate to ribulose 5-phosphate and CO(2), with concomitant reduction of NADP to NADPH.</text>
</comment>
<comment type="catalytic activity">
    <reaction evidence="3">
        <text>6-phospho-D-gluconate + NADP(+) = D-ribulose 5-phosphate + CO2 + NADPH</text>
        <dbReference type="Rhea" id="RHEA:10116"/>
        <dbReference type="ChEBI" id="CHEBI:16526"/>
        <dbReference type="ChEBI" id="CHEBI:57783"/>
        <dbReference type="ChEBI" id="CHEBI:58121"/>
        <dbReference type="ChEBI" id="CHEBI:58349"/>
        <dbReference type="ChEBI" id="CHEBI:58759"/>
        <dbReference type="EC" id="1.1.1.44"/>
    </reaction>
    <physiologicalReaction direction="left-to-right" evidence="3">
        <dbReference type="Rhea" id="RHEA:10117"/>
    </physiologicalReaction>
</comment>
<comment type="biophysicochemical properties">
    <kinetics>
        <KM evidence="3">40 uM for 6-phosphoglutanate</KM>
        <KM evidence="3">6 uM for NADP</KM>
    </kinetics>
</comment>
<comment type="pathway">
    <text evidence="4">Carbohydrate degradation; pentose phosphate pathway; D-ribulose 5-phosphate from D-glucose 6-phosphate (oxidative stage): step 3/3.</text>
</comment>
<comment type="subunit">
    <text evidence="3">Homodimer.</text>
</comment>
<comment type="subcellular location">
    <subcellularLocation>
        <location evidence="2">Plastid</location>
        <location evidence="2">Chloroplast</location>
    </subcellularLocation>
</comment>
<comment type="similarity">
    <text evidence="4">Belongs to the 6-phosphogluconate dehydrogenase family.</text>
</comment>
<sequence length="537" mass="58293">MRSEVPSSTSPSFLSPPFIHLPLLSLSSPTPLPHSSSSTFSLFSTMAASQIGLVGLAVMGQNLALNIAEKGFPISVYNRTASKVDETLDRAKSEGDLPLSGHYTPRDFVLSIERPRSIVILVKAGSPVDQTIASLASFMEPGDTIIDGGNEWYQNTERRLSDAHSNGLLYLGMGVSGGEEGARFGPSLMPGGDFQAYDNIQHILKKVAAQVDDGPCVTYIGEGGSGNFVKMVHNGIEYGDMQLISEAYDVLKNVGGLSNEELGQIFDEWNKSELESFLVEITADIFKVKDDLADGGLVDKILDKTGMKGTGKWTVQQAAELSVAAPTIAASLDCRYLSGLKEERENAAKILEAAGMKEEVNAIRGGVDKKRLIDDVRQALYASKICSYAQGMNLLRAKSAEMGWDLNLGELARIWKGGCIIRAVFLDSIKQAYQRNPNLASLVVDPEFAKEMVQRQAAWRRVVGLAVSAGISTPGMCASLAYFDTYRRARLPANLVQAQRDYFGAHTYERVDLPGSYHTEWSKLARKSDPNVAAALH</sequence>
<proteinExistence type="evidence at protein level"/>
<name>6PGD2_SPIOL</name>